<evidence type="ECO:0000255" key="1">
    <source>
        <dbReference type="HAMAP-Rule" id="MF_00473"/>
    </source>
</evidence>
<feature type="chain" id="PRO_1000125749" description="Glucose-6-phosphate isomerase">
    <location>
        <begin position="1"/>
        <end position="541"/>
    </location>
</feature>
<feature type="active site" description="Proton donor" evidence="1">
    <location>
        <position position="346"/>
    </location>
</feature>
<feature type="active site" evidence="1">
    <location>
        <position position="377"/>
    </location>
</feature>
<feature type="active site" evidence="1">
    <location>
        <position position="506"/>
    </location>
</feature>
<protein>
    <recommendedName>
        <fullName evidence="1">Glucose-6-phosphate isomerase</fullName>
        <shortName evidence="1">GPI</shortName>
        <ecNumber evidence="1">5.3.1.9</ecNumber>
    </recommendedName>
    <alternativeName>
        <fullName evidence="1">Phosphoglucose isomerase</fullName>
        <shortName evidence="1">PGI</shortName>
    </alternativeName>
    <alternativeName>
        <fullName evidence="1">Phosphohexose isomerase</fullName>
        <shortName evidence="1">PHI</shortName>
    </alternativeName>
</protein>
<reference key="1">
    <citation type="journal article" date="2010" name="Stand. Genomic Sci.">
        <title>Complete genome sequence of Rhizobium leguminosarum bv trifolii strain WSM2304, an effective microsymbiont of the South American clover Trifolium polymorphum.</title>
        <authorList>
            <person name="Reeve W."/>
            <person name="O'Hara G."/>
            <person name="Chain P."/>
            <person name="Ardley J."/>
            <person name="Brau L."/>
            <person name="Nandesena K."/>
            <person name="Tiwari R."/>
            <person name="Malfatti S."/>
            <person name="Kiss H."/>
            <person name="Lapidus A."/>
            <person name="Copeland A."/>
            <person name="Nolan M."/>
            <person name="Land M."/>
            <person name="Ivanova N."/>
            <person name="Mavromatis K."/>
            <person name="Markowitz V."/>
            <person name="Kyrpides N."/>
            <person name="Melino V."/>
            <person name="Denton M."/>
            <person name="Yates R."/>
            <person name="Howieson J."/>
        </authorList>
    </citation>
    <scope>NUCLEOTIDE SEQUENCE [LARGE SCALE GENOMIC DNA]</scope>
    <source>
        <strain>WSM2304</strain>
    </source>
</reference>
<keyword id="KW-0963">Cytoplasm</keyword>
<keyword id="KW-0312">Gluconeogenesis</keyword>
<keyword id="KW-0324">Glycolysis</keyword>
<keyword id="KW-0413">Isomerase</keyword>
<keyword id="KW-1185">Reference proteome</keyword>
<gene>
    <name evidence="1" type="primary">pgi</name>
    <name type="ordered locus">Rleg2_0137</name>
</gene>
<dbReference type="EC" id="5.3.1.9" evidence="1"/>
<dbReference type="EMBL" id="CP001191">
    <property type="protein sequence ID" value="ACI53439.1"/>
    <property type="molecule type" value="Genomic_DNA"/>
</dbReference>
<dbReference type="RefSeq" id="WP_012556472.1">
    <property type="nucleotide sequence ID" value="NC_011369.1"/>
</dbReference>
<dbReference type="SMR" id="B5ZNS9"/>
<dbReference type="STRING" id="395492.Rleg2_0137"/>
<dbReference type="KEGG" id="rlt:Rleg2_0137"/>
<dbReference type="eggNOG" id="COG0166">
    <property type="taxonomic scope" value="Bacteria"/>
</dbReference>
<dbReference type="HOGENOM" id="CLU_017947_3_1_5"/>
<dbReference type="UniPathway" id="UPA00109">
    <property type="reaction ID" value="UER00181"/>
</dbReference>
<dbReference type="UniPathway" id="UPA00138"/>
<dbReference type="Proteomes" id="UP000008330">
    <property type="component" value="Chromosome"/>
</dbReference>
<dbReference type="GO" id="GO:0005829">
    <property type="term" value="C:cytosol"/>
    <property type="evidence" value="ECO:0007669"/>
    <property type="project" value="TreeGrafter"/>
</dbReference>
<dbReference type="GO" id="GO:0097367">
    <property type="term" value="F:carbohydrate derivative binding"/>
    <property type="evidence" value="ECO:0007669"/>
    <property type="project" value="InterPro"/>
</dbReference>
<dbReference type="GO" id="GO:0004347">
    <property type="term" value="F:glucose-6-phosphate isomerase activity"/>
    <property type="evidence" value="ECO:0007669"/>
    <property type="project" value="UniProtKB-UniRule"/>
</dbReference>
<dbReference type="GO" id="GO:0048029">
    <property type="term" value="F:monosaccharide binding"/>
    <property type="evidence" value="ECO:0007669"/>
    <property type="project" value="TreeGrafter"/>
</dbReference>
<dbReference type="GO" id="GO:0006094">
    <property type="term" value="P:gluconeogenesis"/>
    <property type="evidence" value="ECO:0007669"/>
    <property type="project" value="UniProtKB-UniRule"/>
</dbReference>
<dbReference type="GO" id="GO:0051156">
    <property type="term" value="P:glucose 6-phosphate metabolic process"/>
    <property type="evidence" value="ECO:0007669"/>
    <property type="project" value="TreeGrafter"/>
</dbReference>
<dbReference type="GO" id="GO:0006096">
    <property type="term" value="P:glycolytic process"/>
    <property type="evidence" value="ECO:0007669"/>
    <property type="project" value="UniProtKB-UniRule"/>
</dbReference>
<dbReference type="CDD" id="cd05015">
    <property type="entry name" value="SIS_PGI_1"/>
    <property type="match status" value="1"/>
</dbReference>
<dbReference type="CDD" id="cd05016">
    <property type="entry name" value="SIS_PGI_2"/>
    <property type="match status" value="1"/>
</dbReference>
<dbReference type="FunFam" id="3.40.50.10490:FF:000018">
    <property type="entry name" value="Glucose-6-phosphate isomerase"/>
    <property type="match status" value="1"/>
</dbReference>
<dbReference type="Gene3D" id="1.10.1390.10">
    <property type="match status" value="1"/>
</dbReference>
<dbReference type="Gene3D" id="3.40.50.10490">
    <property type="entry name" value="Glucose-6-phosphate isomerase like protein, domain 1"/>
    <property type="match status" value="2"/>
</dbReference>
<dbReference type="HAMAP" id="MF_00473">
    <property type="entry name" value="G6P_isomerase"/>
    <property type="match status" value="1"/>
</dbReference>
<dbReference type="InterPro" id="IPR001672">
    <property type="entry name" value="G6P_Isomerase"/>
</dbReference>
<dbReference type="InterPro" id="IPR023096">
    <property type="entry name" value="G6P_Isomerase_C"/>
</dbReference>
<dbReference type="InterPro" id="IPR018189">
    <property type="entry name" value="Phosphoglucose_isomerase_CS"/>
</dbReference>
<dbReference type="InterPro" id="IPR046348">
    <property type="entry name" value="SIS_dom_sf"/>
</dbReference>
<dbReference type="InterPro" id="IPR035476">
    <property type="entry name" value="SIS_PGI_1"/>
</dbReference>
<dbReference type="InterPro" id="IPR035482">
    <property type="entry name" value="SIS_PGI_2"/>
</dbReference>
<dbReference type="NCBIfam" id="NF001211">
    <property type="entry name" value="PRK00179.1"/>
    <property type="match status" value="1"/>
</dbReference>
<dbReference type="PANTHER" id="PTHR11469">
    <property type="entry name" value="GLUCOSE-6-PHOSPHATE ISOMERASE"/>
    <property type="match status" value="1"/>
</dbReference>
<dbReference type="PANTHER" id="PTHR11469:SF1">
    <property type="entry name" value="GLUCOSE-6-PHOSPHATE ISOMERASE"/>
    <property type="match status" value="1"/>
</dbReference>
<dbReference type="Pfam" id="PF00342">
    <property type="entry name" value="PGI"/>
    <property type="match status" value="1"/>
</dbReference>
<dbReference type="PRINTS" id="PR00662">
    <property type="entry name" value="G6PISOMERASE"/>
</dbReference>
<dbReference type="SUPFAM" id="SSF53697">
    <property type="entry name" value="SIS domain"/>
    <property type="match status" value="1"/>
</dbReference>
<dbReference type="PROSITE" id="PS00765">
    <property type="entry name" value="P_GLUCOSE_ISOMERASE_1"/>
    <property type="match status" value="1"/>
</dbReference>
<dbReference type="PROSITE" id="PS00174">
    <property type="entry name" value="P_GLUCOSE_ISOMERASE_2"/>
    <property type="match status" value="1"/>
</dbReference>
<dbReference type="PROSITE" id="PS51463">
    <property type="entry name" value="P_GLUCOSE_ISOMERASE_3"/>
    <property type="match status" value="1"/>
</dbReference>
<proteinExistence type="inferred from homology"/>
<name>G6PI_RHILW</name>
<accession>B5ZNS9</accession>
<comment type="function">
    <text evidence="1">Catalyzes the reversible isomerization of glucose-6-phosphate to fructose-6-phosphate.</text>
</comment>
<comment type="catalytic activity">
    <reaction evidence="1">
        <text>alpha-D-glucose 6-phosphate = beta-D-fructose 6-phosphate</text>
        <dbReference type="Rhea" id="RHEA:11816"/>
        <dbReference type="ChEBI" id="CHEBI:57634"/>
        <dbReference type="ChEBI" id="CHEBI:58225"/>
        <dbReference type="EC" id="5.3.1.9"/>
    </reaction>
</comment>
<comment type="pathway">
    <text evidence="1">Carbohydrate biosynthesis; gluconeogenesis.</text>
</comment>
<comment type="pathway">
    <text evidence="1">Carbohydrate degradation; glycolysis; D-glyceraldehyde 3-phosphate and glycerone phosphate from D-glucose: step 2/4.</text>
</comment>
<comment type="subcellular location">
    <subcellularLocation>
        <location evidence="1">Cytoplasm</location>
    </subcellularLocation>
</comment>
<comment type="similarity">
    <text evidence="1">Belongs to the GPI family.</text>
</comment>
<organism>
    <name type="scientific">Rhizobium leguminosarum bv. trifolii (strain WSM2304)</name>
    <dbReference type="NCBI Taxonomy" id="395492"/>
    <lineage>
        <taxon>Bacteria</taxon>
        <taxon>Pseudomonadati</taxon>
        <taxon>Pseudomonadota</taxon>
        <taxon>Alphaproteobacteria</taxon>
        <taxon>Hyphomicrobiales</taxon>
        <taxon>Rhizobiaceae</taxon>
        <taxon>Rhizobium/Agrobacterium group</taxon>
        <taxon>Rhizobium</taxon>
    </lineage>
</organism>
<sequence length="541" mass="58615">MNAIVEQLKSTAAATKATDLRAAFAADSERFSRFSVSLDDLLMDFSKTAVNDDILKLLVKLAEEGGVEKKREEMFSGKVINFTEDRAVLHTALRNRSNTPVLVDGKDVMPDVNAVLAAMGKFADGVRSGALKGATGKAITDVINIGIGGSDLGPVMATLALAPFHDGPRAHFVSNIDGAHIADILKLVQPETTLFIVASKTFTTVETMTNAQTARNFIAKALGEAAVQHHFAAVSTALDKVAAFGIDSARVFGFWDWVGGRYSIWSAIGLPLMIAIGPENFGKFLDGAHAVDNHFRQAPITENLPMLLGLIGFYHRNVLEYPTRAILPYDQRLSRFPAYLQQLDMESNGKGVTINGTPVEGNSGPVVWGEPGTNGQHAFYQLIHQGTSIIPAEFMIAANAFEPELRHQHQLLISNVLAQSEALMKGRSFAEAKKQLTDKGMDDKKADFIAPHRVFTGNRPSITFVYDKLTPYALGRLIALYEHRVFVEGVLFRINSFDQWGVELGKELATGLLPVVEGKESAAGHDSSTQGLVAALSKLAK</sequence>